<gene>
    <name evidence="1" type="primary">htpG</name>
    <name type="ordered locus">Patl_2894</name>
</gene>
<sequence>MADVAHQETHGFQTEVKQLLQLMIHSLYSNKEIFLRELVSNAADAADKLRFKALSNDSLYEGDGDLCVKLSIDKDAGSITISDNGIGMDRASVIEHLGTIAKSGTSEFFSNLSGDQAKDSQLIGQFGVGFYSAFIVAEKVVVRSRAAGDDASKGVEWTSEGEGEFTVADIEKADRGTEITLFLREDEKEFADDWRLRSIVSKYSDHISIPVMMYKEEVPESDGPDGEKVPAQPAKWEAVNKATALWTRDKSEVSDEEYKEFYKHISHDFADPLVWSHNKVEGKTEYNSLLYIPAKAPFDMWNRDQKHGLKLYVQRVFIMDDAEQFMPTYLRFVKGLLDSNDLPLNVSREILQDNKITQAIRQGCTKRVLQMLERVAKNDSEKYQGFWAEFGNVLKEGPAEDHANKEKVAGLLRFASTENDSDAQNVSLADYVSRMKDGQDKIYYITADSYKAAKSSPHLEIFRKKGIEVLLMSDRVDEWLMSHLTEFDEKSFQSITHGELDLGDLDDEDSKKAQEEAEKQVEGLTERVKTVLGDKVAEVKFTHRLTDSPACIVADGTGMSTQMIKLMQAAGQPVPEAKYHFELNPEHSLVKMLADEQDEERFGQWTEVLFDQAALSEQGSLKDPAAFVHNLNTLLMNLAK</sequence>
<organism>
    <name type="scientific">Pseudoalteromonas atlantica (strain T6c / ATCC BAA-1087)</name>
    <dbReference type="NCBI Taxonomy" id="3042615"/>
    <lineage>
        <taxon>Bacteria</taxon>
        <taxon>Pseudomonadati</taxon>
        <taxon>Pseudomonadota</taxon>
        <taxon>Gammaproteobacteria</taxon>
        <taxon>Alteromonadales</taxon>
        <taxon>Alteromonadaceae</taxon>
        <taxon>Paraglaciecola</taxon>
    </lineage>
</organism>
<keyword id="KW-0067">ATP-binding</keyword>
<keyword id="KW-0143">Chaperone</keyword>
<keyword id="KW-0963">Cytoplasm</keyword>
<keyword id="KW-0547">Nucleotide-binding</keyword>
<keyword id="KW-0346">Stress response</keyword>
<name>HTPG_PSEA6</name>
<comment type="function">
    <text evidence="1">Molecular chaperone. Has ATPase activity.</text>
</comment>
<comment type="subunit">
    <text evidence="1">Homodimer.</text>
</comment>
<comment type="subcellular location">
    <subcellularLocation>
        <location evidence="1">Cytoplasm</location>
    </subcellularLocation>
</comment>
<comment type="similarity">
    <text evidence="1">Belongs to the heat shock protein 90 family.</text>
</comment>
<evidence type="ECO:0000255" key="1">
    <source>
        <dbReference type="HAMAP-Rule" id="MF_00505"/>
    </source>
</evidence>
<accession>Q15RT6</accession>
<reference key="1">
    <citation type="submission" date="2006-06" db="EMBL/GenBank/DDBJ databases">
        <title>Complete sequence of Pseudoalteromonas atlantica T6c.</title>
        <authorList>
            <consortium name="US DOE Joint Genome Institute"/>
            <person name="Copeland A."/>
            <person name="Lucas S."/>
            <person name="Lapidus A."/>
            <person name="Barry K."/>
            <person name="Detter J.C."/>
            <person name="Glavina del Rio T."/>
            <person name="Hammon N."/>
            <person name="Israni S."/>
            <person name="Dalin E."/>
            <person name="Tice H."/>
            <person name="Pitluck S."/>
            <person name="Saunders E."/>
            <person name="Brettin T."/>
            <person name="Bruce D."/>
            <person name="Han C."/>
            <person name="Tapia R."/>
            <person name="Gilna P."/>
            <person name="Schmutz J."/>
            <person name="Larimer F."/>
            <person name="Land M."/>
            <person name="Hauser L."/>
            <person name="Kyrpides N."/>
            <person name="Kim E."/>
            <person name="Karls A.C."/>
            <person name="Bartlett D."/>
            <person name="Higgins B.P."/>
            <person name="Richardson P."/>
        </authorList>
    </citation>
    <scope>NUCLEOTIDE SEQUENCE [LARGE SCALE GENOMIC DNA]</scope>
    <source>
        <strain>T6c / ATCC BAA-1087</strain>
    </source>
</reference>
<feature type="chain" id="PRO_1000060528" description="Chaperone protein HtpG">
    <location>
        <begin position="1"/>
        <end position="640"/>
    </location>
</feature>
<feature type="region of interest" description="A; substrate-binding" evidence="1">
    <location>
        <begin position="1"/>
        <end position="348"/>
    </location>
</feature>
<feature type="region of interest" description="B" evidence="1">
    <location>
        <begin position="349"/>
        <end position="565"/>
    </location>
</feature>
<feature type="region of interest" description="C" evidence="1">
    <location>
        <begin position="566"/>
        <end position="640"/>
    </location>
</feature>
<dbReference type="EMBL" id="CP000388">
    <property type="protein sequence ID" value="ABG41402.1"/>
    <property type="molecule type" value="Genomic_DNA"/>
</dbReference>
<dbReference type="RefSeq" id="WP_011575659.1">
    <property type="nucleotide sequence ID" value="NC_008228.1"/>
</dbReference>
<dbReference type="SMR" id="Q15RT6"/>
<dbReference type="STRING" id="342610.Patl_2894"/>
<dbReference type="KEGG" id="pat:Patl_2894"/>
<dbReference type="eggNOG" id="COG0326">
    <property type="taxonomic scope" value="Bacteria"/>
</dbReference>
<dbReference type="HOGENOM" id="CLU_006684_3_0_6"/>
<dbReference type="OrthoDB" id="9802640at2"/>
<dbReference type="Proteomes" id="UP000001981">
    <property type="component" value="Chromosome"/>
</dbReference>
<dbReference type="GO" id="GO:0005737">
    <property type="term" value="C:cytoplasm"/>
    <property type="evidence" value="ECO:0007669"/>
    <property type="project" value="UniProtKB-SubCell"/>
</dbReference>
<dbReference type="GO" id="GO:0005524">
    <property type="term" value="F:ATP binding"/>
    <property type="evidence" value="ECO:0007669"/>
    <property type="project" value="UniProtKB-UniRule"/>
</dbReference>
<dbReference type="GO" id="GO:0016887">
    <property type="term" value="F:ATP hydrolysis activity"/>
    <property type="evidence" value="ECO:0007669"/>
    <property type="project" value="InterPro"/>
</dbReference>
<dbReference type="GO" id="GO:0140662">
    <property type="term" value="F:ATP-dependent protein folding chaperone"/>
    <property type="evidence" value="ECO:0007669"/>
    <property type="project" value="InterPro"/>
</dbReference>
<dbReference type="GO" id="GO:0051082">
    <property type="term" value="F:unfolded protein binding"/>
    <property type="evidence" value="ECO:0007669"/>
    <property type="project" value="UniProtKB-UniRule"/>
</dbReference>
<dbReference type="CDD" id="cd16927">
    <property type="entry name" value="HATPase_Hsp90-like"/>
    <property type="match status" value="1"/>
</dbReference>
<dbReference type="FunFam" id="3.30.230.80:FF:000002">
    <property type="entry name" value="Molecular chaperone HtpG"/>
    <property type="match status" value="1"/>
</dbReference>
<dbReference type="FunFam" id="3.30.565.10:FF:000009">
    <property type="entry name" value="Molecular chaperone HtpG"/>
    <property type="match status" value="1"/>
</dbReference>
<dbReference type="FunFam" id="3.40.50.11260:FF:000002">
    <property type="entry name" value="Molecular chaperone HtpG"/>
    <property type="match status" value="1"/>
</dbReference>
<dbReference type="Gene3D" id="3.30.230.80">
    <property type="match status" value="1"/>
</dbReference>
<dbReference type="Gene3D" id="3.40.50.11260">
    <property type="match status" value="1"/>
</dbReference>
<dbReference type="Gene3D" id="1.20.120.790">
    <property type="entry name" value="Heat shock protein 90, C-terminal domain"/>
    <property type="match status" value="1"/>
</dbReference>
<dbReference type="Gene3D" id="3.30.565.10">
    <property type="entry name" value="Histidine kinase-like ATPase, C-terminal domain"/>
    <property type="match status" value="1"/>
</dbReference>
<dbReference type="HAMAP" id="MF_00505">
    <property type="entry name" value="HSP90"/>
    <property type="match status" value="1"/>
</dbReference>
<dbReference type="InterPro" id="IPR036890">
    <property type="entry name" value="HATPase_C_sf"/>
</dbReference>
<dbReference type="InterPro" id="IPR019805">
    <property type="entry name" value="Heat_shock_protein_90_CS"/>
</dbReference>
<dbReference type="InterPro" id="IPR037196">
    <property type="entry name" value="HSP90_C"/>
</dbReference>
<dbReference type="InterPro" id="IPR001404">
    <property type="entry name" value="Hsp90_fam"/>
</dbReference>
<dbReference type="InterPro" id="IPR020575">
    <property type="entry name" value="Hsp90_N"/>
</dbReference>
<dbReference type="InterPro" id="IPR020568">
    <property type="entry name" value="Ribosomal_Su5_D2-typ_SF"/>
</dbReference>
<dbReference type="NCBIfam" id="NF003555">
    <property type="entry name" value="PRK05218.1"/>
    <property type="match status" value="1"/>
</dbReference>
<dbReference type="PANTHER" id="PTHR11528">
    <property type="entry name" value="HEAT SHOCK PROTEIN 90 FAMILY MEMBER"/>
    <property type="match status" value="1"/>
</dbReference>
<dbReference type="Pfam" id="PF13589">
    <property type="entry name" value="HATPase_c_3"/>
    <property type="match status" value="1"/>
</dbReference>
<dbReference type="Pfam" id="PF00183">
    <property type="entry name" value="HSP90"/>
    <property type="match status" value="1"/>
</dbReference>
<dbReference type="PIRSF" id="PIRSF002583">
    <property type="entry name" value="Hsp90"/>
    <property type="match status" value="1"/>
</dbReference>
<dbReference type="PRINTS" id="PR00775">
    <property type="entry name" value="HEATSHOCK90"/>
</dbReference>
<dbReference type="SMART" id="SM00387">
    <property type="entry name" value="HATPase_c"/>
    <property type="match status" value="1"/>
</dbReference>
<dbReference type="SUPFAM" id="SSF55874">
    <property type="entry name" value="ATPase domain of HSP90 chaperone/DNA topoisomerase II/histidine kinase"/>
    <property type="match status" value="1"/>
</dbReference>
<dbReference type="SUPFAM" id="SSF110942">
    <property type="entry name" value="HSP90 C-terminal domain"/>
    <property type="match status" value="1"/>
</dbReference>
<dbReference type="SUPFAM" id="SSF54211">
    <property type="entry name" value="Ribosomal protein S5 domain 2-like"/>
    <property type="match status" value="1"/>
</dbReference>
<dbReference type="PROSITE" id="PS00298">
    <property type="entry name" value="HSP90"/>
    <property type="match status" value="1"/>
</dbReference>
<protein>
    <recommendedName>
        <fullName evidence="1">Chaperone protein HtpG</fullName>
    </recommendedName>
    <alternativeName>
        <fullName evidence="1">Heat shock protein HtpG</fullName>
    </alternativeName>
    <alternativeName>
        <fullName evidence="1">High temperature protein G</fullName>
    </alternativeName>
</protein>
<proteinExistence type="inferred from homology"/>